<sequence length="421" mass="44545">MKDLENIPALMEDIGKRAKAAAQQLATASAAQKEQALNAAADAVWAQRGEIIAANAKDLEFGRDKGLSSAMMDRLMLDEARIQGIVDGLRAVAAQADPVGAVLDEWTQPSGLRIQRVRTPLGVIGVIYESRPNVTADAGALCLKSGNAVILRGGSESLHSAQAIHGCLAAGLRAADLPEDAVQLVPTRDRAAVQELLTMTAYVDVIVPRGGKGLVGLVQREARVPVFAHLEGIVHIYLDKDADRKKAIDVVLNAKTRRTGICGAAECLLIHEDIADSIGKDVLDLLAMGGVEIHAEEGLPGPDSMQVATSEDWGKEYLDAIIAAKKVASIDEAIAHIRRYHSAHTDCIITENDAAVAQFFSELDSAILMHNASTQFADGGEFGMGAEIGIATGKMHARGPVGATQLTSFKYLVRGDGTVRA</sequence>
<name>PROA_RUEST</name>
<proteinExistence type="inferred from homology"/>
<gene>
    <name evidence="1" type="primary">proA</name>
    <name type="ordered locus">TM1040_1205</name>
</gene>
<comment type="function">
    <text evidence="1">Catalyzes the NADPH-dependent reduction of L-glutamate 5-phosphate into L-glutamate 5-semialdehyde and phosphate. The product spontaneously undergoes cyclization to form 1-pyrroline-5-carboxylate.</text>
</comment>
<comment type="catalytic activity">
    <reaction evidence="1">
        <text>L-glutamate 5-semialdehyde + phosphate + NADP(+) = L-glutamyl 5-phosphate + NADPH + H(+)</text>
        <dbReference type="Rhea" id="RHEA:19541"/>
        <dbReference type="ChEBI" id="CHEBI:15378"/>
        <dbReference type="ChEBI" id="CHEBI:43474"/>
        <dbReference type="ChEBI" id="CHEBI:57783"/>
        <dbReference type="ChEBI" id="CHEBI:58066"/>
        <dbReference type="ChEBI" id="CHEBI:58274"/>
        <dbReference type="ChEBI" id="CHEBI:58349"/>
        <dbReference type="EC" id="1.2.1.41"/>
    </reaction>
</comment>
<comment type="pathway">
    <text evidence="1">Amino-acid biosynthesis; L-proline biosynthesis; L-glutamate 5-semialdehyde from L-glutamate: step 2/2.</text>
</comment>
<comment type="subcellular location">
    <subcellularLocation>
        <location evidence="1">Cytoplasm</location>
    </subcellularLocation>
</comment>
<comment type="similarity">
    <text evidence="1">Belongs to the gamma-glutamyl phosphate reductase family.</text>
</comment>
<comment type="sequence caution" evidence="2">
    <conflict type="erroneous initiation">
        <sequence resource="EMBL-CDS" id="ABF63938"/>
    </conflict>
</comment>
<accession>Q1GHC8</accession>
<protein>
    <recommendedName>
        <fullName evidence="1">Gamma-glutamyl phosphate reductase</fullName>
        <shortName evidence="1">GPR</shortName>
        <ecNumber evidence="1">1.2.1.41</ecNumber>
    </recommendedName>
    <alternativeName>
        <fullName evidence="1">Glutamate-5-semialdehyde dehydrogenase</fullName>
    </alternativeName>
    <alternativeName>
        <fullName evidence="1">Glutamyl-gamma-semialdehyde dehydrogenase</fullName>
        <shortName evidence="1">GSA dehydrogenase</shortName>
    </alternativeName>
</protein>
<feature type="chain" id="PRO_0000252592" description="Gamma-glutamyl phosphate reductase">
    <location>
        <begin position="1"/>
        <end position="421"/>
    </location>
</feature>
<evidence type="ECO:0000255" key="1">
    <source>
        <dbReference type="HAMAP-Rule" id="MF_00412"/>
    </source>
</evidence>
<evidence type="ECO:0000305" key="2"/>
<dbReference type="EC" id="1.2.1.41" evidence="1"/>
<dbReference type="EMBL" id="CP000377">
    <property type="protein sequence ID" value="ABF63938.1"/>
    <property type="status" value="ALT_INIT"/>
    <property type="molecule type" value="Genomic_DNA"/>
</dbReference>
<dbReference type="RefSeq" id="WP_044027091.1">
    <property type="nucleotide sequence ID" value="NC_008044.1"/>
</dbReference>
<dbReference type="SMR" id="Q1GHC8"/>
<dbReference type="STRING" id="292414.TM1040_1205"/>
<dbReference type="KEGG" id="sit:TM1040_1205"/>
<dbReference type="eggNOG" id="COG0014">
    <property type="taxonomic scope" value="Bacteria"/>
</dbReference>
<dbReference type="HOGENOM" id="CLU_030231_0_0_5"/>
<dbReference type="OrthoDB" id="9809970at2"/>
<dbReference type="UniPathway" id="UPA00098">
    <property type="reaction ID" value="UER00360"/>
</dbReference>
<dbReference type="Proteomes" id="UP000000636">
    <property type="component" value="Chromosome"/>
</dbReference>
<dbReference type="GO" id="GO:0005737">
    <property type="term" value="C:cytoplasm"/>
    <property type="evidence" value="ECO:0007669"/>
    <property type="project" value="UniProtKB-SubCell"/>
</dbReference>
<dbReference type="GO" id="GO:0004350">
    <property type="term" value="F:glutamate-5-semialdehyde dehydrogenase activity"/>
    <property type="evidence" value="ECO:0007669"/>
    <property type="project" value="UniProtKB-UniRule"/>
</dbReference>
<dbReference type="GO" id="GO:0050661">
    <property type="term" value="F:NADP binding"/>
    <property type="evidence" value="ECO:0007669"/>
    <property type="project" value="InterPro"/>
</dbReference>
<dbReference type="GO" id="GO:0055129">
    <property type="term" value="P:L-proline biosynthetic process"/>
    <property type="evidence" value="ECO:0007669"/>
    <property type="project" value="UniProtKB-UniRule"/>
</dbReference>
<dbReference type="CDD" id="cd07079">
    <property type="entry name" value="ALDH_F18-19_ProA-GPR"/>
    <property type="match status" value="1"/>
</dbReference>
<dbReference type="Gene3D" id="3.40.605.10">
    <property type="entry name" value="Aldehyde Dehydrogenase, Chain A, domain 1"/>
    <property type="match status" value="1"/>
</dbReference>
<dbReference type="Gene3D" id="3.40.309.10">
    <property type="entry name" value="Aldehyde Dehydrogenase, Chain A, domain 2"/>
    <property type="match status" value="1"/>
</dbReference>
<dbReference type="HAMAP" id="MF_00412">
    <property type="entry name" value="ProA"/>
    <property type="match status" value="1"/>
</dbReference>
<dbReference type="InterPro" id="IPR016161">
    <property type="entry name" value="Ald_DH/histidinol_DH"/>
</dbReference>
<dbReference type="InterPro" id="IPR016163">
    <property type="entry name" value="Ald_DH_C"/>
</dbReference>
<dbReference type="InterPro" id="IPR016162">
    <property type="entry name" value="Ald_DH_N"/>
</dbReference>
<dbReference type="InterPro" id="IPR015590">
    <property type="entry name" value="Aldehyde_DH_dom"/>
</dbReference>
<dbReference type="InterPro" id="IPR012134">
    <property type="entry name" value="Glu-5-SA_DH"/>
</dbReference>
<dbReference type="InterPro" id="IPR000965">
    <property type="entry name" value="GPR_dom"/>
</dbReference>
<dbReference type="NCBIfam" id="NF001221">
    <property type="entry name" value="PRK00197.1"/>
    <property type="match status" value="1"/>
</dbReference>
<dbReference type="NCBIfam" id="TIGR00407">
    <property type="entry name" value="proA"/>
    <property type="match status" value="1"/>
</dbReference>
<dbReference type="PANTHER" id="PTHR11063:SF8">
    <property type="entry name" value="DELTA-1-PYRROLINE-5-CARBOXYLATE SYNTHASE"/>
    <property type="match status" value="1"/>
</dbReference>
<dbReference type="PANTHER" id="PTHR11063">
    <property type="entry name" value="GLUTAMATE SEMIALDEHYDE DEHYDROGENASE"/>
    <property type="match status" value="1"/>
</dbReference>
<dbReference type="Pfam" id="PF00171">
    <property type="entry name" value="Aldedh"/>
    <property type="match status" value="1"/>
</dbReference>
<dbReference type="PIRSF" id="PIRSF000151">
    <property type="entry name" value="GPR"/>
    <property type="match status" value="1"/>
</dbReference>
<dbReference type="SUPFAM" id="SSF53720">
    <property type="entry name" value="ALDH-like"/>
    <property type="match status" value="1"/>
</dbReference>
<organism>
    <name type="scientific">Ruegeria sp. (strain TM1040)</name>
    <name type="common">Silicibacter sp.</name>
    <dbReference type="NCBI Taxonomy" id="292414"/>
    <lineage>
        <taxon>Bacteria</taxon>
        <taxon>Pseudomonadati</taxon>
        <taxon>Pseudomonadota</taxon>
        <taxon>Alphaproteobacteria</taxon>
        <taxon>Rhodobacterales</taxon>
        <taxon>Roseobacteraceae</taxon>
        <taxon>Ruegeria</taxon>
    </lineage>
</organism>
<reference key="1">
    <citation type="submission" date="2006-05" db="EMBL/GenBank/DDBJ databases">
        <title>Complete sequence of chromosome of Silicibacter sp. TM1040.</title>
        <authorList>
            <consortium name="US DOE Joint Genome Institute"/>
            <person name="Copeland A."/>
            <person name="Lucas S."/>
            <person name="Lapidus A."/>
            <person name="Barry K."/>
            <person name="Detter J.C."/>
            <person name="Glavina del Rio T."/>
            <person name="Hammon N."/>
            <person name="Israni S."/>
            <person name="Dalin E."/>
            <person name="Tice H."/>
            <person name="Pitluck S."/>
            <person name="Brettin T."/>
            <person name="Bruce D."/>
            <person name="Han C."/>
            <person name="Tapia R."/>
            <person name="Goodwin L."/>
            <person name="Thompson L.S."/>
            <person name="Gilna P."/>
            <person name="Schmutz J."/>
            <person name="Larimer F."/>
            <person name="Land M."/>
            <person name="Hauser L."/>
            <person name="Kyrpides N."/>
            <person name="Kim E."/>
            <person name="Belas R."/>
            <person name="Moran M.A."/>
            <person name="Buchan A."/>
            <person name="Gonzalez J.M."/>
            <person name="Schell M.A."/>
            <person name="Sun F."/>
            <person name="Richardson P."/>
        </authorList>
    </citation>
    <scope>NUCLEOTIDE SEQUENCE [LARGE SCALE GENOMIC DNA]</scope>
    <source>
        <strain>TM1040</strain>
    </source>
</reference>
<keyword id="KW-0028">Amino-acid biosynthesis</keyword>
<keyword id="KW-0963">Cytoplasm</keyword>
<keyword id="KW-0521">NADP</keyword>
<keyword id="KW-0560">Oxidoreductase</keyword>
<keyword id="KW-0641">Proline biosynthesis</keyword>
<keyword id="KW-1185">Reference proteome</keyword>